<name>CNFNB_XENLA</name>
<organism>
    <name type="scientific">Xenopus laevis</name>
    <name type="common">African clawed frog</name>
    <dbReference type="NCBI Taxonomy" id="8355"/>
    <lineage>
        <taxon>Eukaryota</taxon>
        <taxon>Metazoa</taxon>
        <taxon>Chordata</taxon>
        <taxon>Craniata</taxon>
        <taxon>Vertebrata</taxon>
        <taxon>Euteleostomi</taxon>
        <taxon>Amphibia</taxon>
        <taxon>Batrachia</taxon>
        <taxon>Anura</taxon>
        <taxon>Pipoidea</taxon>
        <taxon>Pipidae</taxon>
        <taxon>Xenopodinae</taxon>
        <taxon>Xenopus</taxon>
        <taxon>Xenopus</taxon>
    </lineage>
</organism>
<sequence>MSYPVSAQPQGVQGYMSSNSSQWNSDVFDCCEDMGTCLCGTFVPCILACKVSKDYGECCCLPCLFGSVLAVRTGIRERYHIEGSICNDWVCLSFCAPCTLCQMARELKARN</sequence>
<dbReference type="EMBL" id="BC074489">
    <property type="protein sequence ID" value="AAH74489.1"/>
    <property type="molecule type" value="mRNA"/>
</dbReference>
<dbReference type="RefSeq" id="NP_001086327.1">
    <property type="nucleotide sequence ID" value="NM_001092858.1"/>
</dbReference>
<dbReference type="DNASU" id="444756"/>
<dbReference type="GeneID" id="444756"/>
<dbReference type="KEGG" id="xla:444756"/>
<dbReference type="AGR" id="Xenbase:XB-GENE-5915744"/>
<dbReference type="CTD" id="444756"/>
<dbReference type="Xenbase" id="XB-GENE-5915744">
    <property type="gene designation" value="cnfn.S"/>
</dbReference>
<dbReference type="OMA" id="IDCIVAM"/>
<dbReference type="OrthoDB" id="1045822at2759"/>
<dbReference type="Proteomes" id="UP000186698">
    <property type="component" value="Chromosome 7S"/>
</dbReference>
<dbReference type="Bgee" id="444756">
    <property type="expression patterns" value="Expressed in zone of skin and 14 other cell types or tissues"/>
</dbReference>
<dbReference type="InterPro" id="IPR006461">
    <property type="entry name" value="PLAC_motif_containing"/>
</dbReference>
<dbReference type="NCBIfam" id="TIGR01571">
    <property type="entry name" value="A_thal_Cys_rich"/>
    <property type="match status" value="1"/>
</dbReference>
<dbReference type="PANTHER" id="PTHR15907">
    <property type="entry name" value="DUF614 FAMILY PROTEIN-RELATED"/>
    <property type="match status" value="1"/>
</dbReference>
<dbReference type="Pfam" id="PF04749">
    <property type="entry name" value="PLAC8"/>
    <property type="match status" value="1"/>
</dbReference>
<gene>
    <name type="primary">cnfn-b</name>
</gene>
<proteinExistence type="inferred from homology"/>
<protein>
    <recommendedName>
        <fullName>Cornifelin homolog B</fullName>
    </recommendedName>
</protein>
<evidence type="ECO:0000305" key="1"/>
<reference key="1">
    <citation type="submission" date="2004-06" db="EMBL/GenBank/DDBJ databases">
        <authorList>
            <consortium name="NIH - Xenopus Gene Collection (XGC) project"/>
        </authorList>
    </citation>
    <scope>NUCLEOTIDE SEQUENCE [LARGE SCALE MRNA]</scope>
    <source>
        <tissue>Brain</tissue>
    </source>
</reference>
<feature type="chain" id="PRO_0000261199" description="Cornifelin homolog B">
    <location>
        <begin position="1"/>
        <end position="111"/>
    </location>
</feature>
<accession>Q6DK99</accession>
<comment type="similarity">
    <text evidence="1">Belongs to the cornifelin family.</text>
</comment>
<keyword id="KW-1185">Reference proteome</keyword>